<sequence>MAQRDLKFTRNIGIAAHIDAGKTTTTERILYYTGISHKIGEVHDGAATMDWMEQEQERGITITSAATHCKWMYRDQEFTVNIIDTPGHVDFTVEVERSLRVLDGVVALFSAVDGVEPQSETVWRQADKYRVPRLGFVNKMDRQGADFFNVCRQVREMLGGNPVPLQVPIGDEIDFKGVVDLISKKAIIWNDEDHGMTYDTIEIPEELLDDVNKYRAELVEAVAEYDEALMEKFFEDESSITEDEIIAALRAATIDMSIIPMMCGSAFKNKGVQAMLDAVMRYLPSPADVEAIEGTNPDTGEEESRKPHVDSPFAALAFKIATDPFVGRLAFFRAYSGTLDAGSYVLNVRSGKKERISRIYQMHSNKQEPIDSIEAGDIGAAVGFKDIKTGDTLTDMKHPIVLESMSFPAPVIGIAVEPKTKADVEKMGMALGKLAEEDPTFTVKTDENSGQTIISGMGELHLEIIIDRMKREFKVEVNVGEPQVEYKETITKSADHREVYKKQSGGRGKFADIVFEMGPIDEDFEGTGLQFVDVIKGGRIPKEFVPSVEKGFKEAMKNGPLAGFTMDSLKVTLKDGSFHPVDSDQLSFELAAKMGYKDAAKKAGAVILEPIMKVEVVTPEENMGDIVGDLNRRRGQVNNMSDRSGAKVIKAEVPLSEMFGYVTTLRTLSSGRATSTMEFSHYAETPSNISEEVIKAAKGAANE</sequence>
<comment type="function">
    <text evidence="1">Catalyzes the GTP-dependent ribosomal translocation step during translation elongation. During this step, the ribosome changes from the pre-translocational (PRE) to the post-translocational (POST) state as the newly formed A-site-bound peptidyl-tRNA and P-site-bound deacylated tRNA move to the P and E sites, respectively. Catalyzes the coordinated movement of the two tRNA molecules, the mRNA and conformational changes in the ribosome.</text>
</comment>
<comment type="subcellular location">
    <subcellularLocation>
        <location evidence="1">Cytoplasm</location>
    </subcellularLocation>
</comment>
<comment type="similarity">
    <text evidence="1">Belongs to the TRAFAC class translation factor GTPase superfamily. Classic translation factor GTPase family. EF-G/EF-2 subfamily.</text>
</comment>
<protein>
    <recommendedName>
        <fullName evidence="1">Elongation factor G</fullName>
        <shortName evidence="1">EF-G</shortName>
    </recommendedName>
</protein>
<gene>
    <name evidence="1" type="primary">fusA</name>
    <name type="ordered locus">GFO_2841</name>
</gene>
<organism>
    <name type="scientific">Christiangramia forsetii (strain DSM 17595 / CGMCC 1.15422 / KT0803)</name>
    <name type="common">Gramella forsetii</name>
    <dbReference type="NCBI Taxonomy" id="411154"/>
    <lineage>
        <taxon>Bacteria</taxon>
        <taxon>Pseudomonadati</taxon>
        <taxon>Bacteroidota</taxon>
        <taxon>Flavobacteriia</taxon>
        <taxon>Flavobacteriales</taxon>
        <taxon>Flavobacteriaceae</taxon>
        <taxon>Christiangramia</taxon>
    </lineage>
</organism>
<evidence type="ECO:0000255" key="1">
    <source>
        <dbReference type="HAMAP-Rule" id="MF_00054"/>
    </source>
</evidence>
<accession>A0M5A0</accession>
<feature type="chain" id="PRO_1000071145" description="Elongation factor G">
    <location>
        <begin position="1"/>
        <end position="703"/>
    </location>
</feature>
<feature type="domain" description="tr-type G">
    <location>
        <begin position="7"/>
        <end position="287"/>
    </location>
</feature>
<feature type="binding site" evidence="1">
    <location>
        <begin position="16"/>
        <end position="23"/>
    </location>
    <ligand>
        <name>GTP</name>
        <dbReference type="ChEBI" id="CHEBI:37565"/>
    </ligand>
</feature>
<feature type="binding site" evidence="1">
    <location>
        <begin position="84"/>
        <end position="88"/>
    </location>
    <ligand>
        <name>GTP</name>
        <dbReference type="ChEBI" id="CHEBI:37565"/>
    </ligand>
</feature>
<feature type="binding site" evidence="1">
    <location>
        <begin position="138"/>
        <end position="141"/>
    </location>
    <ligand>
        <name>GTP</name>
        <dbReference type="ChEBI" id="CHEBI:37565"/>
    </ligand>
</feature>
<reference key="1">
    <citation type="journal article" date="2006" name="Environ. Microbiol.">
        <title>Whole genome analysis of the marine Bacteroidetes'Gramella forsetii' reveals adaptations to degradation of polymeric organic matter.</title>
        <authorList>
            <person name="Bauer M."/>
            <person name="Kube M."/>
            <person name="Teeling H."/>
            <person name="Richter M."/>
            <person name="Lombardot T."/>
            <person name="Allers E."/>
            <person name="Wuerdemann C.A."/>
            <person name="Quast C."/>
            <person name="Kuhl H."/>
            <person name="Knaust F."/>
            <person name="Woebken D."/>
            <person name="Bischof K."/>
            <person name="Mussmann M."/>
            <person name="Choudhuri J.V."/>
            <person name="Meyer F."/>
            <person name="Reinhardt R."/>
            <person name="Amann R.I."/>
            <person name="Gloeckner F.O."/>
        </authorList>
    </citation>
    <scope>NUCLEOTIDE SEQUENCE [LARGE SCALE GENOMIC DNA]</scope>
    <source>
        <strain>DSM 17595 / CGMCC 1.15422 / KT0803</strain>
    </source>
</reference>
<keyword id="KW-0963">Cytoplasm</keyword>
<keyword id="KW-0251">Elongation factor</keyword>
<keyword id="KW-0342">GTP-binding</keyword>
<keyword id="KW-0547">Nucleotide-binding</keyword>
<keyword id="KW-0648">Protein biosynthesis</keyword>
<dbReference type="EMBL" id="CU207366">
    <property type="protein sequence ID" value="CAL67795.1"/>
    <property type="molecule type" value="Genomic_DNA"/>
</dbReference>
<dbReference type="RefSeq" id="WP_011710697.1">
    <property type="nucleotide sequence ID" value="NC_008571.1"/>
</dbReference>
<dbReference type="SMR" id="A0M5A0"/>
<dbReference type="STRING" id="411154.GFO_2841"/>
<dbReference type="KEGG" id="gfo:GFO_2841"/>
<dbReference type="eggNOG" id="COG0480">
    <property type="taxonomic scope" value="Bacteria"/>
</dbReference>
<dbReference type="HOGENOM" id="CLU_002794_4_1_10"/>
<dbReference type="OrthoDB" id="9801591at2"/>
<dbReference type="Proteomes" id="UP000000755">
    <property type="component" value="Chromosome"/>
</dbReference>
<dbReference type="GO" id="GO:0005737">
    <property type="term" value="C:cytoplasm"/>
    <property type="evidence" value="ECO:0007669"/>
    <property type="project" value="UniProtKB-SubCell"/>
</dbReference>
<dbReference type="GO" id="GO:0005525">
    <property type="term" value="F:GTP binding"/>
    <property type="evidence" value="ECO:0007669"/>
    <property type="project" value="UniProtKB-UniRule"/>
</dbReference>
<dbReference type="GO" id="GO:0003924">
    <property type="term" value="F:GTPase activity"/>
    <property type="evidence" value="ECO:0007669"/>
    <property type="project" value="InterPro"/>
</dbReference>
<dbReference type="GO" id="GO:0003746">
    <property type="term" value="F:translation elongation factor activity"/>
    <property type="evidence" value="ECO:0007669"/>
    <property type="project" value="UniProtKB-UniRule"/>
</dbReference>
<dbReference type="GO" id="GO:0032790">
    <property type="term" value="P:ribosome disassembly"/>
    <property type="evidence" value="ECO:0007669"/>
    <property type="project" value="TreeGrafter"/>
</dbReference>
<dbReference type="CDD" id="cd01886">
    <property type="entry name" value="EF-G"/>
    <property type="match status" value="1"/>
</dbReference>
<dbReference type="CDD" id="cd16262">
    <property type="entry name" value="EFG_III"/>
    <property type="match status" value="1"/>
</dbReference>
<dbReference type="CDD" id="cd01434">
    <property type="entry name" value="EFG_mtEFG1_IV"/>
    <property type="match status" value="1"/>
</dbReference>
<dbReference type="CDD" id="cd03713">
    <property type="entry name" value="EFG_mtEFG_C"/>
    <property type="match status" value="1"/>
</dbReference>
<dbReference type="CDD" id="cd04088">
    <property type="entry name" value="EFG_mtEFG_II"/>
    <property type="match status" value="1"/>
</dbReference>
<dbReference type="FunFam" id="2.40.30.10:FF:000006">
    <property type="entry name" value="Elongation factor G"/>
    <property type="match status" value="1"/>
</dbReference>
<dbReference type="FunFam" id="3.30.230.10:FF:000003">
    <property type="entry name" value="Elongation factor G"/>
    <property type="match status" value="1"/>
</dbReference>
<dbReference type="FunFam" id="3.30.70.240:FF:000001">
    <property type="entry name" value="Elongation factor G"/>
    <property type="match status" value="1"/>
</dbReference>
<dbReference type="FunFam" id="3.30.70.870:FF:000001">
    <property type="entry name" value="Elongation factor G"/>
    <property type="match status" value="1"/>
</dbReference>
<dbReference type="FunFam" id="3.40.50.300:FF:000029">
    <property type="entry name" value="Elongation factor G"/>
    <property type="match status" value="1"/>
</dbReference>
<dbReference type="Gene3D" id="3.30.230.10">
    <property type="match status" value="1"/>
</dbReference>
<dbReference type="Gene3D" id="3.30.70.240">
    <property type="match status" value="1"/>
</dbReference>
<dbReference type="Gene3D" id="3.30.70.870">
    <property type="entry name" value="Elongation Factor G (Translational Gtpase), domain 3"/>
    <property type="match status" value="1"/>
</dbReference>
<dbReference type="Gene3D" id="3.40.50.300">
    <property type="entry name" value="P-loop containing nucleotide triphosphate hydrolases"/>
    <property type="match status" value="1"/>
</dbReference>
<dbReference type="Gene3D" id="2.40.30.10">
    <property type="entry name" value="Translation factors"/>
    <property type="match status" value="1"/>
</dbReference>
<dbReference type="HAMAP" id="MF_00054_B">
    <property type="entry name" value="EF_G_EF_2_B"/>
    <property type="match status" value="1"/>
</dbReference>
<dbReference type="InterPro" id="IPR041095">
    <property type="entry name" value="EFG_II"/>
</dbReference>
<dbReference type="InterPro" id="IPR009022">
    <property type="entry name" value="EFG_III"/>
</dbReference>
<dbReference type="InterPro" id="IPR035647">
    <property type="entry name" value="EFG_III/V"/>
</dbReference>
<dbReference type="InterPro" id="IPR047872">
    <property type="entry name" value="EFG_IV"/>
</dbReference>
<dbReference type="InterPro" id="IPR035649">
    <property type="entry name" value="EFG_V"/>
</dbReference>
<dbReference type="InterPro" id="IPR000640">
    <property type="entry name" value="EFG_V-like"/>
</dbReference>
<dbReference type="InterPro" id="IPR004161">
    <property type="entry name" value="EFTu-like_2"/>
</dbReference>
<dbReference type="InterPro" id="IPR031157">
    <property type="entry name" value="G_TR_CS"/>
</dbReference>
<dbReference type="InterPro" id="IPR027417">
    <property type="entry name" value="P-loop_NTPase"/>
</dbReference>
<dbReference type="InterPro" id="IPR020568">
    <property type="entry name" value="Ribosomal_Su5_D2-typ_SF"/>
</dbReference>
<dbReference type="InterPro" id="IPR014721">
    <property type="entry name" value="Ribsml_uS5_D2-typ_fold_subgr"/>
</dbReference>
<dbReference type="InterPro" id="IPR005225">
    <property type="entry name" value="Small_GTP-bd"/>
</dbReference>
<dbReference type="InterPro" id="IPR000795">
    <property type="entry name" value="T_Tr_GTP-bd_dom"/>
</dbReference>
<dbReference type="InterPro" id="IPR009000">
    <property type="entry name" value="Transl_B-barrel_sf"/>
</dbReference>
<dbReference type="InterPro" id="IPR004540">
    <property type="entry name" value="Transl_elong_EFG/EF2"/>
</dbReference>
<dbReference type="InterPro" id="IPR005517">
    <property type="entry name" value="Transl_elong_EFG/EF2_IV"/>
</dbReference>
<dbReference type="NCBIfam" id="TIGR00484">
    <property type="entry name" value="EF-G"/>
    <property type="match status" value="1"/>
</dbReference>
<dbReference type="NCBIfam" id="NF009381">
    <property type="entry name" value="PRK12740.1-5"/>
    <property type="match status" value="1"/>
</dbReference>
<dbReference type="NCBIfam" id="TIGR00231">
    <property type="entry name" value="small_GTP"/>
    <property type="match status" value="1"/>
</dbReference>
<dbReference type="PANTHER" id="PTHR43261:SF1">
    <property type="entry name" value="RIBOSOME-RELEASING FACTOR 2, MITOCHONDRIAL"/>
    <property type="match status" value="1"/>
</dbReference>
<dbReference type="PANTHER" id="PTHR43261">
    <property type="entry name" value="TRANSLATION ELONGATION FACTOR G-RELATED"/>
    <property type="match status" value="1"/>
</dbReference>
<dbReference type="Pfam" id="PF00679">
    <property type="entry name" value="EFG_C"/>
    <property type="match status" value="1"/>
</dbReference>
<dbReference type="Pfam" id="PF14492">
    <property type="entry name" value="EFG_III"/>
    <property type="match status" value="1"/>
</dbReference>
<dbReference type="Pfam" id="PF03764">
    <property type="entry name" value="EFG_IV"/>
    <property type="match status" value="1"/>
</dbReference>
<dbReference type="Pfam" id="PF00009">
    <property type="entry name" value="GTP_EFTU"/>
    <property type="match status" value="1"/>
</dbReference>
<dbReference type="Pfam" id="PF03144">
    <property type="entry name" value="GTP_EFTU_D2"/>
    <property type="match status" value="1"/>
</dbReference>
<dbReference type="PRINTS" id="PR00315">
    <property type="entry name" value="ELONGATNFCT"/>
</dbReference>
<dbReference type="SMART" id="SM00838">
    <property type="entry name" value="EFG_C"/>
    <property type="match status" value="1"/>
</dbReference>
<dbReference type="SMART" id="SM00889">
    <property type="entry name" value="EFG_IV"/>
    <property type="match status" value="1"/>
</dbReference>
<dbReference type="SUPFAM" id="SSF54980">
    <property type="entry name" value="EF-G C-terminal domain-like"/>
    <property type="match status" value="2"/>
</dbReference>
<dbReference type="SUPFAM" id="SSF52540">
    <property type="entry name" value="P-loop containing nucleoside triphosphate hydrolases"/>
    <property type="match status" value="1"/>
</dbReference>
<dbReference type="SUPFAM" id="SSF54211">
    <property type="entry name" value="Ribosomal protein S5 domain 2-like"/>
    <property type="match status" value="1"/>
</dbReference>
<dbReference type="SUPFAM" id="SSF50447">
    <property type="entry name" value="Translation proteins"/>
    <property type="match status" value="1"/>
</dbReference>
<dbReference type="PROSITE" id="PS00301">
    <property type="entry name" value="G_TR_1"/>
    <property type="match status" value="1"/>
</dbReference>
<dbReference type="PROSITE" id="PS51722">
    <property type="entry name" value="G_TR_2"/>
    <property type="match status" value="1"/>
</dbReference>
<name>EFG_CHRFK</name>
<proteinExistence type="inferred from homology"/>